<protein>
    <recommendedName>
        <fullName evidence="1">Ribosomal RNA large subunit methyltransferase K/L</fullName>
    </recommendedName>
    <domain>
        <recommendedName>
            <fullName evidence="1">23S rRNA m2G2445 methyltransferase</fullName>
            <ecNumber evidence="1">2.1.1.173</ecNumber>
        </recommendedName>
        <alternativeName>
            <fullName evidence="1">rRNA (guanine-N(2)-)-methyltransferase RlmL</fullName>
        </alternativeName>
    </domain>
    <domain>
        <recommendedName>
            <fullName evidence="1">23S rRNA m7G2069 methyltransferase</fullName>
            <ecNumber evidence="1">2.1.1.264</ecNumber>
        </recommendedName>
        <alternativeName>
            <fullName evidence="1">rRNA (guanine-N(7)-)-methyltransferase RlmK</fullName>
        </alternativeName>
    </domain>
</protein>
<dbReference type="EC" id="2.1.1.173" evidence="1"/>
<dbReference type="EC" id="2.1.1.264" evidence="1"/>
<dbReference type="EMBL" id="CP000036">
    <property type="protein sequence ID" value="ABB66847.1"/>
    <property type="molecule type" value="Genomic_DNA"/>
</dbReference>
<dbReference type="SMR" id="Q31YL1"/>
<dbReference type="KEGG" id="sbo:SBO_2283"/>
<dbReference type="HOGENOM" id="CLU_014042_2_0_6"/>
<dbReference type="Proteomes" id="UP000007067">
    <property type="component" value="Chromosome"/>
</dbReference>
<dbReference type="GO" id="GO:0005737">
    <property type="term" value="C:cytoplasm"/>
    <property type="evidence" value="ECO:0007669"/>
    <property type="project" value="UniProtKB-SubCell"/>
</dbReference>
<dbReference type="GO" id="GO:0052915">
    <property type="term" value="F:23S rRNA (guanine(2445)-N(2))-methyltransferase activity"/>
    <property type="evidence" value="ECO:0007669"/>
    <property type="project" value="UniProtKB-UniRule"/>
</dbReference>
<dbReference type="GO" id="GO:0003723">
    <property type="term" value="F:RNA binding"/>
    <property type="evidence" value="ECO:0007669"/>
    <property type="project" value="UniProtKB-KW"/>
</dbReference>
<dbReference type="GO" id="GO:0070043">
    <property type="term" value="F:rRNA (guanine-N7-)-methyltransferase activity"/>
    <property type="evidence" value="ECO:0007669"/>
    <property type="project" value="UniProtKB-UniRule"/>
</dbReference>
<dbReference type="CDD" id="cd02440">
    <property type="entry name" value="AdoMet_MTases"/>
    <property type="match status" value="1"/>
</dbReference>
<dbReference type="CDD" id="cd11715">
    <property type="entry name" value="THUMP_AdoMetMT"/>
    <property type="match status" value="1"/>
</dbReference>
<dbReference type="FunFam" id="3.30.750.80:FF:000001">
    <property type="entry name" value="Ribosomal RNA large subunit methyltransferase K/L"/>
    <property type="match status" value="1"/>
</dbReference>
<dbReference type="FunFam" id="3.40.50.150:FF:000039">
    <property type="entry name" value="Ribosomal RNA large subunit methyltransferase K/L"/>
    <property type="match status" value="1"/>
</dbReference>
<dbReference type="Gene3D" id="3.30.2130.30">
    <property type="match status" value="1"/>
</dbReference>
<dbReference type="Gene3D" id="3.30.750.80">
    <property type="entry name" value="RNA methyltransferase domain (HRMD) like"/>
    <property type="match status" value="1"/>
</dbReference>
<dbReference type="Gene3D" id="3.40.50.150">
    <property type="entry name" value="Vaccinia Virus protein VP39"/>
    <property type="match status" value="2"/>
</dbReference>
<dbReference type="HAMAP" id="MF_01858">
    <property type="entry name" value="23SrRNA_methyltr_KL"/>
    <property type="match status" value="1"/>
</dbReference>
<dbReference type="InterPro" id="IPR017244">
    <property type="entry name" value="23SrRNA_methyltr_KL"/>
</dbReference>
<dbReference type="InterPro" id="IPR002052">
    <property type="entry name" value="DNA_methylase_N6_adenine_CS"/>
</dbReference>
<dbReference type="InterPro" id="IPR000241">
    <property type="entry name" value="RlmKL-like_Mtase"/>
</dbReference>
<dbReference type="InterPro" id="IPR053943">
    <property type="entry name" value="RlmKL-like_Mtase_CS"/>
</dbReference>
<dbReference type="InterPro" id="IPR054170">
    <property type="entry name" value="RlmL_1st"/>
</dbReference>
<dbReference type="InterPro" id="IPR019614">
    <property type="entry name" value="SAM-dep_methyl-trfase"/>
</dbReference>
<dbReference type="InterPro" id="IPR029063">
    <property type="entry name" value="SAM-dependent_MTases_sf"/>
</dbReference>
<dbReference type="InterPro" id="IPR004114">
    <property type="entry name" value="THUMP_dom"/>
</dbReference>
<dbReference type="NCBIfam" id="NF008748">
    <property type="entry name" value="PRK11783.1"/>
    <property type="match status" value="1"/>
</dbReference>
<dbReference type="PANTHER" id="PTHR47313">
    <property type="entry name" value="RIBOSOMAL RNA LARGE SUBUNIT METHYLTRANSFERASE K/L"/>
    <property type="match status" value="1"/>
</dbReference>
<dbReference type="PANTHER" id="PTHR47313:SF1">
    <property type="entry name" value="RIBOSOMAL RNA LARGE SUBUNIT METHYLTRANSFERASE K_L"/>
    <property type="match status" value="1"/>
</dbReference>
<dbReference type="Pfam" id="PF10672">
    <property type="entry name" value="Methyltrans_SAM"/>
    <property type="match status" value="1"/>
</dbReference>
<dbReference type="Pfam" id="PF22020">
    <property type="entry name" value="RlmL_1st"/>
    <property type="match status" value="1"/>
</dbReference>
<dbReference type="Pfam" id="PF02926">
    <property type="entry name" value="THUMP"/>
    <property type="match status" value="1"/>
</dbReference>
<dbReference type="Pfam" id="PF01170">
    <property type="entry name" value="UPF0020"/>
    <property type="match status" value="1"/>
</dbReference>
<dbReference type="PIRSF" id="PIRSF037618">
    <property type="entry name" value="RNA_Mtase_bacteria_prd"/>
    <property type="match status" value="1"/>
</dbReference>
<dbReference type="PRINTS" id="PR00507">
    <property type="entry name" value="N12N6MTFRASE"/>
</dbReference>
<dbReference type="SMART" id="SM00981">
    <property type="entry name" value="THUMP"/>
    <property type="match status" value="1"/>
</dbReference>
<dbReference type="SUPFAM" id="SSF53335">
    <property type="entry name" value="S-adenosyl-L-methionine-dependent methyltransferases"/>
    <property type="match status" value="2"/>
</dbReference>
<dbReference type="PROSITE" id="PS51165">
    <property type="entry name" value="THUMP"/>
    <property type="match status" value="1"/>
</dbReference>
<dbReference type="PROSITE" id="PS01261">
    <property type="entry name" value="UPF0020"/>
    <property type="match status" value="1"/>
</dbReference>
<keyword id="KW-0963">Cytoplasm</keyword>
<keyword id="KW-0489">Methyltransferase</keyword>
<keyword id="KW-0694">RNA-binding</keyword>
<keyword id="KW-0698">rRNA processing</keyword>
<keyword id="KW-0949">S-adenosyl-L-methionine</keyword>
<keyword id="KW-0808">Transferase</keyword>
<accession>Q31YL1</accession>
<comment type="function">
    <text evidence="1">Specifically methylates the guanine in position 2445 (m2G2445) and the guanine in position 2069 (m7G2069) of 23S rRNA.</text>
</comment>
<comment type="catalytic activity">
    <reaction evidence="1">
        <text>guanosine(2445) in 23S rRNA + S-adenosyl-L-methionine = N(2)-methylguanosine(2445) in 23S rRNA + S-adenosyl-L-homocysteine + H(+)</text>
        <dbReference type="Rhea" id="RHEA:42740"/>
        <dbReference type="Rhea" id="RHEA-COMP:10215"/>
        <dbReference type="Rhea" id="RHEA-COMP:10216"/>
        <dbReference type="ChEBI" id="CHEBI:15378"/>
        <dbReference type="ChEBI" id="CHEBI:57856"/>
        <dbReference type="ChEBI" id="CHEBI:59789"/>
        <dbReference type="ChEBI" id="CHEBI:74269"/>
        <dbReference type="ChEBI" id="CHEBI:74481"/>
        <dbReference type="EC" id="2.1.1.173"/>
    </reaction>
</comment>
<comment type="catalytic activity">
    <reaction evidence="1">
        <text>guanosine(2069) in 23S rRNA + S-adenosyl-L-methionine = N(2)-methylguanosine(2069) in 23S rRNA + S-adenosyl-L-homocysteine + H(+)</text>
        <dbReference type="Rhea" id="RHEA:43772"/>
        <dbReference type="Rhea" id="RHEA-COMP:10688"/>
        <dbReference type="Rhea" id="RHEA-COMP:10689"/>
        <dbReference type="ChEBI" id="CHEBI:15378"/>
        <dbReference type="ChEBI" id="CHEBI:57856"/>
        <dbReference type="ChEBI" id="CHEBI:59789"/>
        <dbReference type="ChEBI" id="CHEBI:74269"/>
        <dbReference type="ChEBI" id="CHEBI:74481"/>
        <dbReference type="EC" id="2.1.1.264"/>
    </reaction>
</comment>
<comment type="subcellular location">
    <subcellularLocation>
        <location evidence="1">Cytoplasm</location>
    </subcellularLocation>
</comment>
<comment type="similarity">
    <text evidence="1">Belongs to the methyltransferase superfamily. RlmKL family.</text>
</comment>
<organism>
    <name type="scientific">Shigella boydii serotype 4 (strain Sb227)</name>
    <dbReference type="NCBI Taxonomy" id="300268"/>
    <lineage>
        <taxon>Bacteria</taxon>
        <taxon>Pseudomonadati</taxon>
        <taxon>Pseudomonadota</taxon>
        <taxon>Gammaproteobacteria</taxon>
        <taxon>Enterobacterales</taxon>
        <taxon>Enterobacteriaceae</taxon>
        <taxon>Shigella</taxon>
    </lineage>
</organism>
<proteinExistence type="inferred from homology"/>
<gene>
    <name evidence="1" type="primary">rlmL</name>
    <name type="ordered locus">SBO_2283</name>
</gene>
<feature type="chain" id="PRO_0000366837" description="Ribosomal RNA large subunit methyltransferase K/L">
    <location>
        <begin position="1"/>
        <end position="702"/>
    </location>
</feature>
<feature type="domain" description="THUMP" evidence="1">
    <location>
        <begin position="43"/>
        <end position="154"/>
    </location>
</feature>
<evidence type="ECO:0000255" key="1">
    <source>
        <dbReference type="HAMAP-Rule" id="MF_01858"/>
    </source>
</evidence>
<name>RLMKL_SHIBS</name>
<reference key="1">
    <citation type="journal article" date="2005" name="Nucleic Acids Res.">
        <title>Genome dynamics and diversity of Shigella species, the etiologic agents of bacillary dysentery.</title>
        <authorList>
            <person name="Yang F."/>
            <person name="Yang J."/>
            <person name="Zhang X."/>
            <person name="Chen L."/>
            <person name="Jiang Y."/>
            <person name="Yan Y."/>
            <person name="Tang X."/>
            <person name="Wang J."/>
            <person name="Xiong Z."/>
            <person name="Dong J."/>
            <person name="Xue Y."/>
            <person name="Zhu Y."/>
            <person name="Xu X."/>
            <person name="Sun L."/>
            <person name="Chen S."/>
            <person name="Nie H."/>
            <person name="Peng J."/>
            <person name="Xu J."/>
            <person name="Wang Y."/>
            <person name="Yuan Z."/>
            <person name="Wen Y."/>
            <person name="Yao Z."/>
            <person name="Shen Y."/>
            <person name="Qiang B."/>
            <person name="Hou Y."/>
            <person name="Yu J."/>
            <person name="Jin Q."/>
        </authorList>
    </citation>
    <scope>NUCLEOTIDE SEQUENCE [LARGE SCALE GENOMIC DNA]</scope>
    <source>
        <strain>Sb227</strain>
    </source>
</reference>
<sequence>MNSLFASTARGLEELLKTELENLGAVECQVVQGGVHFKGDTRLVYQSLMWSRLASRIMLPLGECKVYSDLDLYLGVQAINWTEMFNPGATFAVHFSGLNDTIRNSQYGAMKVKDAIVDAFTRKNLPRPNVDRDAPDIRVNVWLHKETASIALDLSGDGLHLRGYRDRAGIAPIKETLAAAIVMRSGWQPGTPLLDPMCGSGTLLIEAAMLATDRAPGLHRGRWGFSGWAQHDEAIWQEVKAEAQTRARKGLAEYSSHFYGSDSDARVIQRARTNARLAGIGELITFEVKDVAQLTNPLPKGPYGTVLSNPPYGERLDSEPALIALHSLLGRIMKNQFGGWNLSLFSASPDLLSCLQLRADKQYKAKNGPLDCVQKNYHVAESTPDSKPAMVAEDYANRLRKNLKKFEKWARQEGIECYRLYDADLPEYNVAVDRYSDWVVVQEYAPPKTIDAHKARQRLFDIIAATISVLGIAPNKLVLKTRERQKGKNQYQKLGEKGEFLEVTEYNAHLWVNLTDYLDTGLFLDHRIARRMLGQMSKGKDFLNLFSYTGSATVHAGLGGALSTTTVDMSRTYLEWAERNLRLNGLTGRAHRLIQADCLAWLREANEQFDLIFIDPPTFSNSKRMEDAFDVQRDHLALMKDLKRLLRAGGTIMFSNNKRGFRMDLDGLAKLGLKAQEITQKTLSQDFARNRQIHNCWLITAA</sequence>